<dbReference type="EMBL" id="CU179680">
    <property type="protein sequence ID" value="CAL59294.1"/>
    <property type="molecule type" value="Genomic_DNA"/>
</dbReference>
<dbReference type="RefSeq" id="WP_004024001.1">
    <property type="nucleotide sequence ID" value="NC_009497.1"/>
</dbReference>
<dbReference type="SMR" id="A5IZ35"/>
<dbReference type="STRING" id="347257.MAG5940"/>
<dbReference type="GeneID" id="93358330"/>
<dbReference type="KEGG" id="maa:MAG5940"/>
<dbReference type="HOGENOM" id="CLU_104295_1_2_14"/>
<dbReference type="Proteomes" id="UP000007065">
    <property type="component" value="Chromosome"/>
</dbReference>
<dbReference type="GO" id="GO:0015935">
    <property type="term" value="C:small ribosomal subunit"/>
    <property type="evidence" value="ECO:0007669"/>
    <property type="project" value="InterPro"/>
</dbReference>
<dbReference type="GO" id="GO:0019843">
    <property type="term" value="F:rRNA binding"/>
    <property type="evidence" value="ECO:0007669"/>
    <property type="project" value="UniProtKB-UniRule"/>
</dbReference>
<dbReference type="GO" id="GO:0003735">
    <property type="term" value="F:structural constituent of ribosome"/>
    <property type="evidence" value="ECO:0007669"/>
    <property type="project" value="InterPro"/>
</dbReference>
<dbReference type="GO" id="GO:0000049">
    <property type="term" value="F:tRNA binding"/>
    <property type="evidence" value="ECO:0007669"/>
    <property type="project" value="UniProtKB-UniRule"/>
</dbReference>
<dbReference type="GO" id="GO:0006412">
    <property type="term" value="P:translation"/>
    <property type="evidence" value="ECO:0007669"/>
    <property type="project" value="UniProtKB-UniRule"/>
</dbReference>
<dbReference type="CDD" id="cd03368">
    <property type="entry name" value="Ribosomal_S12"/>
    <property type="match status" value="1"/>
</dbReference>
<dbReference type="FunFam" id="2.40.50.140:FF:000099">
    <property type="entry name" value="Ribosomal protein S12, mitochondrial"/>
    <property type="match status" value="1"/>
</dbReference>
<dbReference type="Gene3D" id="2.40.50.140">
    <property type="entry name" value="Nucleic acid-binding proteins"/>
    <property type="match status" value="1"/>
</dbReference>
<dbReference type="HAMAP" id="MF_00403_B">
    <property type="entry name" value="Ribosomal_uS12_B"/>
    <property type="match status" value="1"/>
</dbReference>
<dbReference type="InterPro" id="IPR012340">
    <property type="entry name" value="NA-bd_OB-fold"/>
</dbReference>
<dbReference type="InterPro" id="IPR006032">
    <property type="entry name" value="Ribosomal_uS12"/>
</dbReference>
<dbReference type="InterPro" id="IPR005679">
    <property type="entry name" value="Ribosomal_uS12_bac"/>
</dbReference>
<dbReference type="NCBIfam" id="TIGR00981">
    <property type="entry name" value="rpsL_bact"/>
    <property type="match status" value="1"/>
</dbReference>
<dbReference type="PANTHER" id="PTHR11652">
    <property type="entry name" value="30S RIBOSOMAL PROTEIN S12 FAMILY MEMBER"/>
    <property type="match status" value="1"/>
</dbReference>
<dbReference type="Pfam" id="PF00164">
    <property type="entry name" value="Ribosom_S12_S23"/>
    <property type="match status" value="1"/>
</dbReference>
<dbReference type="PRINTS" id="PR01034">
    <property type="entry name" value="RIBOSOMALS12"/>
</dbReference>
<dbReference type="SUPFAM" id="SSF50249">
    <property type="entry name" value="Nucleic acid-binding proteins"/>
    <property type="match status" value="1"/>
</dbReference>
<dbReference type="PROSITE" id="PS00055">
    <property type="entry name" value="RIBOSOMAL_S12"/>
    <property type="match status" value="1"/>
</dbReference>
<keyword id="KW-0488">Methylation</keyword>
<keyword id="KW-1185">Reference proteome</keyword>
<keyword id="KW-0687">Ribonucleoprotein</keyword>
<keyword id="KW-0689">Ribosomal protein</keyword>
<keyword id="KW-0694">RNA-binding</keyword>
<keyword id="KW-0699">rRNA-binding</keyword>
<keyword id="KW-0820">tRNA-binding</keyword>
<protein>
    <recommendedName>
        <fullName evidence="2">Small ribosomal subunit protein uS12</fullName>
    </recommendedName>
    <alternativeName>
        <fullName evidence="3">30S ribosomal protein S12</fullName>
    </alternativeName>
</protein>
<organism>
    <name type="scientific">Mycoplasmopsis agalactiae (strain NCTC 10123 / CIP 59.7 / PG2)</name>
    <name type="common">Mycoplasma agalactiae</name>
    <dbReference type="NCBI Taxonomy" id="347257"/>
    <lineage>
        <taxon>Bacteria</taxon>
        <taxon>Bacillati</taxon>
        <taxon>Mycoplasmatota</taxon>
        <taxon>Mycoplasmoidales</taxon>
        <taxon>Metamycoplasmataceae</taxon>
        <taxon>Mycoplasmopsis</taxon>
    </lineage>
</organism>
<proteinExistence type="inferred from homology"/>
<sequence length="137" mass="15094">MPTTNQLVVNGRENKVRKQNAPALNLSFNTLTKSARKLPAPFKRGVCTRVATMTPKKPNSASRKYARVKLSNGMEITAYIGGEGHNLQEHSVVLIRGGRVKDLPGVRYHIVRGTQDLAGVANRKQGRSLYGAKKEKK</sequence>
<comment type="function">
    <text evidence="2">With S4 and S5 plays an important role in translational accuracy.</text>
</comment>
<comment type="function">
    <text evidence="2">Interacts with and stabilizes bases of the 16S rRNA that are involved in tRNA selection in the A site and with the mRNA backbone. Located at the interface of the 30S and 50S subunits, it traverses the body of the 30S subunit contacting proteins on the other side and probably holding the rRNA structure together. The combined cluster of proteins S8, S12 and S17 appears to hold together the shoulder and platform of the 30S subunit.</text>
</comment>
<comment type="subunit">
    <text evidence="2">Part of the 30S ribosomal subunit. Contacts proteins S8 and S17. May interact with IF1 in the 30S initiation complex.</text>
</comment>
<comment type="similarity">
    <text evidence="2">Belongs to the universal ribosomal protein uS12 family.</text>
</comment>
<gene>
    <name evidence="2" type="primary">rpsL</name>
    <name type="ordered locus">MAG5940</name>
</gene>
<name>RS12_MYCAP</name>
<accession>A5IZ35</accession>
<feature type="chain" id="PRO_1000194196" description="Small ribosomal subunit protein uS12">
    <location>
        <begin position="1"/>
        <end position="137"/>
    </location>
</feature>
<feature type="modified residue" description="3-methylthioaspartic acid" evidence="1">
    <location>
        <position position="102"/>
    </location>
</feature>
<reference key="1">
    <citation type="journal article" date="2007" name="PLoS Genet.">
        <title>Being pathogenic, plastic, and sexual while living with a nearly minimal bacterial genome.</title>
        <authorList>
            <person name="Sirand-Pugnet P."/>
            <person name="Lartigue C."/>
            <person name="Marenda M."/>
            <person name="Jacob D."/>
            <person name="Barre A."/>
            <person name="Barbe V."/>
            <person name="Schenowitz C."/>
            <person name="Mangenot S."/>
            <person name="Couloux A."/>
            <person name="Segurens B."/>
            <person name="de Daruvar A."/>
            <person name="Blanchard A."/>
            <person name="Citti C."/>
        </authorList>
    </citation>
    <scope>NUCLEOTIDE SEQUENCE [LARGE SCALE GENOMIC DNA]</scope>
    <source>
        <strain>NCTC 10123 / CIP 59.7 / PG2</strain>
    </source>
</reference>
<evidence type="ECO:0000250" key="1"/>
<evidence type="ECO:0000255" key="2">
    <source>
        <dbReference type="HAMAP-Rule" id="MF_00403"/>
    </source>
</evidence>
<evidence type="ECO:0000305" key="3"/>